<gene>
    <name evidence="2" type="primary">hda</name>
    <name type="ordered locus">YPDSF_2175</name>
</gene>
<name>HDA_YERPP</name>
<feature type="chain" id="PRO_1000065573" description="DnaA regulatory inactivator Hda">
    <location>
        <begin position="1"/>
        <end position="235"/>
    </location>
</feature>
<comment type="function">
    <text evidence="1">Mediates the interaction of DNA replication initiator protein DnaA with DNA polymerase subunit beta sliding clamp (dnaN). Stimulates hydrolysis of ATP-DnaA to ADP-DnaA, rendering DnaA inactive for reinitiation, a process called regulatory inhibition of DnaA or RIDA (By similarity).</text>
</comment>
<comment type="subunit">
    <text evidence="2">The active form seems to be an ADP-bound monomer. Forms the RIDA complex (regulatory inactivation of DnaA) of ATP-DnaA, ADP-Hda and the DNA-loaded beta sliding clamp (dnaN).</text>
</comment>
<comment type="similarity">
    <text evidence="2">Belongs to the DnaA family. HdA subfamily.</text>
</comment>
<keyword id="KW-0235">DNA replication</keyword>
<keyword id="KW-0236">DNA replication inhibitor</keyword>
<evidence type="ECO:0000250" key="1"/>
<evidence type="ECO:0000255" key="2">
    <source>
        <dbReference type="HAMAP-Rule" id="MF_01158"/>
    </source>
</evidence>
<protein>
    <recommendedName>
        <fullName evidence="2">DnaA regulatory inactivator Hda</fullName>
    </recommendedName>
</protein>
<organism>
    <name type="scientific">Yersinia pestis (strain Pestoides F)</name>
    <dbReference type="NCBI Taxonomy" id="386656"/>
    <lineage>
        <taxon>Bacteria</taxon>
        <taxon>Pseudomonadati</taxon>
        <taxon>Pseudomonadota</taxon>
        <taxon>Gammaproteobacteria</taxon>
        <taxon>Enterobacterales</taxon>
        <taxon>Yersiniaceae</taxon>
        <taxon>Yersinia</taxon>
    </lineage>
</organism>
<sequence>MLLNTPAQLSLPLYLPDDETFASFYPGENPSLLAAIQSAVHQPHGSYIYFWSREGGGRSHLLHAACAELSQQGEAVGYVPLDKRAYFIPEVLEGMEQLALVCIDNIECIAGDEQWEMAMFNLYNRIVETGRTRLLITGDRPPRQLNLGLPDLASRLDWGQIYKLQPLSDDEKLQALQLRAKLRGFELPEDVGRFLLKRLDREMRTLFMTLDQLDRASITAQRKLTIPFVKEILSL</sequence>
<dbReference type="EMBL" id="CP000668">
    <property type="protein sequence ID" value="ABP40552.1"/>
    <property type="molecule type" value="Genomic_DNA"/>
</dbReference>
<dbReference type="RefSeq" id="WP_002228401.1">
    <property type="nucleotide sequence ID" value="NZ_CP009715.1"/>
</dbReference>
<dbReference type="SMR" id="A4TMP0"/>
<dbReference type="GeneID" id="96666285"/>
<dbReference type="KEGG" id="ypp:YPDSF_2175"/>
<dbReference type="PATRIC" id="fig|386656.14.peg.3655"/>
<dbReference type="GO" id="GO:0006270">
    <property type="term" value="P:DNA replication initiation"/>
    <property type="evidence" value="ECO:0007669"/>
    <property type="project" value="TreeGrafter"/>
</dbReference>
<dbReference type="GO" id="GO:0032297">
    <property type="term" value="P:negative regulation of DNA-templated DNA replication initiation"/>
    <property type="evidence" value="ECO:0007669"/>
    <property type="project" value="InterPro"/>
</dbReference>
<dbReference type="FunFam" id="1.10.8.60:FF:000024">
    <property type="entry name" value="DnaA regulatory inactivator Hda"/>
    <property type="match status" value="1"/>
</dbReference>
<dbReference type="FunFam" id="3.40.50.300:FF:000452">
    <property type="entry name" value="DnaA regulatory inactivator Hda"/>
    <property type="match status" value="1"/>
</dbReference>
<dbReference type="Gene3D" id="1.10.8.60">
    <property type="match status" value="1"/>
</dbReference>
<dbReference type="Gene3D" id="3.40.50.300">
    <property type="entry name" value="P-loop containing nucleotide triphosphate hydrolases"/>
    <property type="match status" value="1"/>
</dbReference>
<dbReference type="HAMAP" id="MF_01158">
    <property type="entry name" value="Hda"/>
    <property type="match status" value="1"/>
</dbReference>
<dbReference type="InterPro" id="IPR020591">
    <property type="entry name" value="Chromosome_initiator_DnaA-like"/>
</dbReference>
<dbReference type="InterPro" id="IPR013317">
    <property type="entry name" value="DnaA_dom"/>
</dbReference>
<dbReference type="InterPro" id="IPR017788">
    <property type="entry name" value="Hda"/>
</dbReference>
<dbReference type="InterPro" id="IPR022864">
    <property type="entry name" value="Hda_Enterobact"/>
</dbReference>
<dbReference type="InterPro" id="IPR055199">
    <property type="entry name" value="Hda_lid"/>
</dbReference>
<dbReference type="InterPro" id="IPR027417">
    <property type="entry name" value="P-loop_NTPase"/>
</dbReference>
<dbReference type="NCBIfam" id="TIGR03420">
    <property type="entry name" value="DnaA_homol_Hda"/>
    <property type="match status" value="1"/>
</dbReference>
<dbReference type="NCBIfam" id="NF005982">
    <property type="entry name" value="PRK08084.1"/>
    <property type="match status" value="1"/>
</dbReference>
<dbReference type="PANTHER" id="PTHR30050">
    <property type="entry name" value="CHROMOSOMAL REPLICATION INITIATOR PROTEIN DNAA"/>
    <property type="match status" value="1"/>
</dbReference>
<dbReference type="PANTHER" id="PTHR30050:SF5">
    <property type="entry name" value="DNAA REGULATORY INACTIVATOR HDA"/>
    <property type="match status" value="1"/>
</dbReference>
<dbReference type="Pfam" id="PF00308">
    <property type="entry name" value="Bac_DnaA"/>
    <property type="match status" value="1"/>
</dbReference>
<dbReference type="Pfam" id="PF22688">
    <property type="entry name" value="Hda_lid"/>
    <property type="match status" value="1"/>
</dbReference>
<dbReference type="PRINTS" id="PR00051">
    <property type="entry name" value="DNAA"/>
</dbReference>
<dbReference type="SUPFAM" id="SSF52540">
    <property type="entry name" value="P-loop containing nucleoside triphosphate hydrolases"/>
    <property type="match status" value="1"/>
</dbReference>
<accession>A4TMP0</accession>
<proteinExistence type="inferred from homology"/>
<reference key="1">
    <citation type="submission" date="2007-02" db="EMBL/GenBank/DDBJ databases">
        <title>Complete sequence of chromosome of Yersinia pestis Pestoides F.</title>
        <authorList>
            <consortium name="US DOE Joint Genome Institute"/>
            <person name="Copeland A."/>
            <person name="Lucas S."/>
            <person name="Lapidus A."/>
            <person name="Barry K."/>
            <person name="Detter J.C."/>
            <person name="Glavina del Rio T."/>
            <person name="Hammon N."/>
            <person name="Israni S."/>
            <person name="Dalin E."/>
            <person name="Tice H."/>
            <person name="Pitluck S."/>
            <person name="Di Bartolo G."/>
            <person name="Chain P."/>
            <person name="Malfatti S."/>
            <person name="Shin M."/>
            <person name="Vergez L."/>
            <person name="Schmutz J."/>
            <person name="Larimer F."/>
            <person name="Land M."/>
            <person name="Hauser L."/>
            <person name="Worsham P."/>
            <person name="Chu M."/>
            <person name="Bearden S."/>
            <person name="Garcia E."/>
            <person name="Richardson P."/>
        </authorList>
    </citation>
    <scope>NUCLEOTIDE SEQUENCE [LARGE SCALE GENOMIC DNA]</scope>
    <source>
        <strain>Pestoides F</strain>
    </source>
</reference>